<name>RSMH_BORPE</name>
<sequence length="364" mass="38866">MEFEHRPVLLEPTVDALVLPDFGGKGAHRQAGEPGPDAATRLQHGVFVDGTFGRGGHSRALLARLGAQARLVVFDKDPQAIAVARELAAGDGRVEVVHGGFATMAEELTARGIEQVDGVMLDLGVSSPQIDDAERGFSFMRDGPLDMRMDTTRGPTVADWLAQASVDEMREVIADYGEERFAFQVAKAIAACRATRPLHTTLQLAECVAGAVRTREKGQHPATRTFQALRIYINRELEELARALASALDLLGPGGRLAVISFHSLEDRMVKQCIAAAARPAAAHARLPLRESELPQPLVRSLGKVVADDVEVAGNARARSAILRVAERTGEPLPPGGGAGFVKAGRVPGEPVRGTRAGSKGRRR</sequence>
<comment type="function">
    <text evidence="1">Specifically methylates the N4 position of cytidine in position 1402 (C1402) of 16S rRNA.</text>
</comment>
<comment type="catalytic activity">
    <reaction evidence="1">
        <text>cytidine(1402) in 16S rRNA + S-adenosyl-L-methionine = N(4)-methylcytidine(1402) in 16S rRNA + S-adenosyl-L-homocysteine + H(+)</text>
        <dbReference type="Rhea" id="RHEA:42928"/>
        <dbReference type="Rhea" id="RHEA-COMP:10286"/>
        <dbReference type="Rhea" id="RHEA-COMP:10287"/>
        <dbReference type="ChEBI" id="CHEBI:15378"/>
        <dbReference type="ChEBI" id="CHEBI:57856"/>
        <dbReference type="ChEBI" id="CHEBI:59789"/>
        <dbReference type="ChEBI" id="CHEBI:74506"/>
        <dbReference type="ChEBI" id="CHEBI:82748"/>
        <dbReference type="EC" id="2.1.1.199"/>
    </reaction>
</comment>
<comment type="subcellular location">
    <subcellularLocation>
        <location evidence="1">Cytoplasm</location>
    </subcellularLocation>
</comment>
<comment type="similarity">
    <text evidence="1">Belongs to the methyltransferase superfamily. RsmH family.</text>
</comment>
<reference key="1">
    <citation type="journal article" date="2003" name="Nat. Genet.">
        <title>Comparative analysis of the genome sequences of Bordetella pertussis, Bordetella parapertussis and Bordetella bronchiseptica.</title>
        <authorList>
            <person name="Parkhill J."/>
            <person name="Sebaihia M."/>
            <person name="Preston A."/>
            <person name="Murphy L.D."/>
            <person name="Thomson N.R."/>
            <person name="Harris D.E."/>
            <person name="Holden M.T.G."/>
            <person name="Churcher C.M."/>
            <person name="Bentley S.D."/>
            <person name="Mungall K.L."/>
            <person name="Cerdeno-Tarraga A.-M."/>
            <person name="Temple L."/>
            <person name="James K.D."/>
            <person name="Harris B."/>
            <person name="Quail M.A."/>
            <person name="Achtman M."/>
            <person name="Atkin R."/>
            <person name="Baker S."/>
            <person name="Basham D."/>
            <person name="Bason N."/>
            <person name="Cherevach I."/>
            <person name="Chillingworth T."/>
            <person name="Collins M."/>
            <person name="Cronin A."/>
            <person name="Davis P."/>
            <person name="Doggett J."/>
            <person name="Feltwell T."/>
            <person name="Goble A."/>
            <person name="Hamlin N."/>
            <person name="Hauser H."/>
            <person name="Holroyd S."/>
            <person name="Jagels K."/>
            <person name="Leather S."/>
            <person name="Moule S."/>
            <person name="Norberczak H."/>
            <person name="O'Neil S."/>
            <person name="Ormond D."/>
            <person name="Price C."/>
            <person name="Rabbinowitsch E."/>
            <person name="Rutter S."/>
            <person name="Sanders M."/>
            <person name="Saunders D."/>
            <person name="Seeger K."/>
            <person name="Sharp S."/>
            <person name="Simmonds M."/>
            <person name="Skelton J."/>
            <person name="Squares R."/>
            <person name="Squares S."/>
            <person name="Stevens K."/>
            <person name="Unwin L."/>
            <person name="Whitehead S."/>
            <person name="Barrell B.G."/>
            <person name="Maskell D.J."/>
        </authorList>
    </citation>
    <scope>NUCLEOTIDE SEQUENCE [LARGE SCALE GENOMIC DNA]</scope>
    <source>
        <strain>Tohama I / ATCC BAA-589 / NCTC 13251</strain>
    </source>
</reference>
<feature type="chain" id="PRO_0000108588" description="Ribosomal RNA small subunit methyltransferase H">
    <location>
        <begin position="1"/>
        <end position="364"/>
    </location>
</feature>
<feature type="region of interest" description="Disordered" evidence="2">
    <location>
        <begin position="333"/>
        <end position="364"/>
    </location>
</feature>
<feature type="binding site" evidence="1">
    <location>
        <begin position="55"/>
        <end position="57"/>
    </location>
    <ligand>
        <name>S-adenosyl-L-methionine</name>
        <dbReference type="ChEBI" id="CHEBI:59789"/>
    </ligand>
</feature>
<feature type="binding site" evidence="1">
    <location>
        <position position="75"/>
    </location>
    <ligand>
        <name>S-adenosyl-L-methionine</name>
        <dbReference type="ChEBI" id="CHEBI:59789"/>
    </ligand>
</feature>
<feature type="binding site" evidence="1">
    <location>
        <position position="101"/>
    </location>
    <ligand>
        <name>S-adenosyl-L-methionine</name>
        <dbReference type="ChEBI" id="CHEBI:59789"/>
    </ligand>
</feature>
<feature type="binding site" evidence="1">
    <location>
        <position position="122"/>
    </location>
    <ligand>
        <name>S-adenosyl-L-methionine</name>
        <dbReference type="ChEBI" id="CHEBI:59789"/>
    </ligand>
</feature>
<feature type="binding site" evidence="1">
    <location>
        <position position="129"/>
    </location>
    <ligand>
        <name>S-adenosyl-L-methionine</name>
        <dbReference type="ChEBI" id="CHEBI:59789"/>
    </ligand>
</feature>
<dbReference type="EC" id="2.1.1.199" evidence="1"/>
<dbReference type="EMBL" id="BX640420">
    <property type="protein sequence ID" value="CAE43301.1"/>
    <property type="molecule type" value="Genomic_DNA"/>
</dbReference>
<dbReference type="RefSeq" id="NP_881605.1">
    <property type="nucleotide sequence ID" value="NC_002929.2"/>
</dbReference>
<dbReference type="RefSeq" id="WP_003814582.1">
    <property type="nucleotide sequence ID" value="NZ_CP039022.1"/>
</dbReference>
<dbReference type="SMR" id="Q7VUP6"/>
<dbReference type="STRING" id="257313.BP3030"/>
<dbReference type="PaxDb" id="257313-BP3030"/>
<dbReference type="GeneID" id="93205548"/>
<dbReference type="KEGG" id="bpe:BP3030"/>
<dbReference type="PATRIC" id="fig|257313.5.peg.3276"/>
<dbReference type="eggNOG" id="COG0275">
    <property type="taxonomic scope" value="Bacteria"/>
</dbReference>
<dbReference type="HOGENOM" id="CLU_038422_2_0_4"/>
<dbReference type="Proteomes" id="UP000002676">
    <property type="component" value="Chromosome"/>
</dbReference>
<dbReference type="GO" id="GO:0005737">
    <property type="term" value="C:cytoplasm"/>
    <property type="evidence" value="ECO:0007669"/>
    <property type="project" value="UniProtKB-SubCell"/>
</dbReference>
<dbReference type="GO" id="GO:0071424">
    <property type="term" value="F:rRNA (cytosine-N4-)-methyltransferase activity"/>
    <property type="evidence" value="ECO:0007669"/>
    <property type="project" value="UniProtKB-UniRule"/>
</dbReference>
<dbReference type="GO" id="GO:0070475">
    <property type="term" value="P:rRNA base methylation"/>
    <property type="evidence" value="ECO:0007669"/>
    <property type="project" value="UniProtKB-UniRule"/>
</dbReference>
<dbReference type="CDD" id="cd02440">
    <property type="entry name" value="AdoMet_MTases"/>
    <property type="match status" value="1"/>
</dbReference>
<dbReference type="Gene3D" id="1.10.150.170">
    <property type="entry name" value="Putative methyltransferase TM0872, insert domain"/>
    <property type="match status" value="1"/>
</dbReference>
<dbReference type="Gene3D" id="3.40.50.150">
    <property type="entry name" value="Vaccinia Virus protein VP39"/>
    <property type="match status" value="1"/>
</dbReference>
<dbReference type="HAMAP" id="MF_01007">
    <property type="entry name" value="16SrRNA_methyltr_H"/>
    <property type="match status" value="1"/>
</dbReference>
<dbReference type="InterPro" id="IPR002903">
    <property type="entry name" value="RsmH"/>
</dbReference>
<dbReference type="InterPro" id="IPR023397">
    <property type="entry name" value="SAM-dep_MeTrfase_MraW_recog"/>
</dbReference>
<dbReference type="InterPro" id="IPR029063">
    <property type="entry name" value="SAM-dependent_MTases_sf"/>
</dbReference>
<dbReference type="NCBIfam" id="TIGR00006">
    <property type="entry name" value="16S rRNA (cytosine(1402)-N(4))-methyltransferase RsmH"/>
    <property type="match status" value="1"/>
</dbReference>
<dbReference type="PANTHER" id="PTHR11265:SF0">
    <property type="entry name" value="12S RRNA N4-METHYLCYTIDINE METHYLTRANSFERASE"/>
    <property type="match status" value="1"/>
</dbReference>
<dbReference type="PANTHER" id="PTHR11265">
    <property type="entry name" value="S-ADENOSYL-METHYLTRANSFERASE MRAW"/>
    <property type="match status" value="1"/>
</dbReference>
<dbReference type="Pfam" id="PF01795">
    <property type="entry name" value="Methyltransf_5"/>
    <property type="match status" value="1"/>
</dbReference>
<dbReference type="PIRSF" id="PIRSF004486">
    <property type="entry name" value="MraW"/>
    <property type="match status" value="1"/>
</dbReference>
<dbReference type="SUPFAM" id="SSF81799">
    <property type="entry name" value="Putative methyltransferase TM0872, insert domain"/>
    <property type="match status" value="1"/>
</dbReference>
<dbReference type="SUPFAM" id="SSF53335">
    <property type="entry name" value="S-adenosyl-L-methionine-dependent methyltransferases"/>
    <property type="match status" value="1"/>
</dbReference>
<proteinExistence type="inferred from homology"/>
<accession>Q7VUP6</accession>
<protein>
    <recommendedName>
        <fullName evidence="1">Ribosomal RNA small subunit methyltransferase H</fullName>
        <ecNumber evidence="1">2.1.1.199</ecNumber>
    </recommendedName>
    <alternativeName>
        <fullName evidence="1">16S rRNA m(4)C1402 methyltransferase</fullName>
    </alternativeName>
    <alternativeName>
        <fullName evidence="1">rRNA (cytosine-N(4)-)-methyltransferase RsmH</fullName>
    </alternativeName>
</protein>
<evidence type="ECO:0000255" key="1">
    <source>
        <dbReference type="HAMAP-Rule" id="MF_01007"/>
    </source>
</evidence>
<evidence type="ECO:0000256" key="2">
    <source>
        <dbReference type="SAM" id="MobiDB-lite"/>
    </source>
</evidence>
<gene>
    <name evidence="1" type="primary">rsmH</name>
    <name type="synonym">mraW</name>
    <name type="ordered locus">BP3030</name>
</gene>
<keyword id="KW-0963">Cytoplasm</keyword>
<keyword id="KW-0489">Methyltransferase</keyword>
<keyword id="KW-1185">Reference proteome</keyword>
<keyword id="KW-0698">rRNA processing</keyword>
<keyword id="KW-0949">S-adenosyl-L-methionine</keyword>
<keyword id="KW-0808">Transferase</keyword>
<organism>
    <name type="scientific">Bordetella pertussis (strain Tohama I / ATCC BAA-589 / NCTC 13251)</name>
    <dbReference type="NCBI Taxonomy" id="257313"/>
    <lineage>
        <taxon>Bacteria</taxon>
        <taxon>Pseudomonadati</taxon>
        <taxon>Pseudomonadota</taxon>
        <taxon>Betaproteobacteria</taxon>
        <taxon>Burkholderiales</taxon>
        <taxon>Alcaligenaceae</taxon>
        <taxon>Bordetella</taxon>
    </lineage>
</organism>